<evidence type="ECO:0000255" key="1">
    <source>
        <dbReference type="HAMAP-Rule" id="MF_00143"/>
    </source>
</evidence>
<accession>B4F181</accession>
<proteinExistence type="inferred from homology"/>
<organism>
    <name type="scientific">Proteus mirabilis (strain HI4320)</name>
    <dbReference type="NCBI Taxonomy" id="529507"/>
    <lineage>
        <taxon>Bacteria</taxon>
        <taxon>Pseudomonadati</taxon>
        <taxon>Pseudomonadota</taxon>
        <taxon>Gammaproteobacteria</taxon>
        <taxon>Enterobacterales</taxon>
        <taxon>Morganellaceae</taxon>
        <taxon>Proteus</taxon>
    </lineage>
</organism>
<feature type="chain" id="PRO_1000096271" description="UPF0114 protein PMI3225">
    <location>
        <begin position="1"/>
        <end position="172"/>
    </location>
</feature>
<feature type="transmembrane region" description="Helical" evidence="1">
    <location>
        <begin position="15"/>
        <end position="35"/>
    </location>
</feature>
<feature type="transmembrane region" description="Helical" evidence="1">
    <location>
        <begin position="57"/>
        <end position="77"/>
    </location>
</feature>
<feature type="transmembrane region" description="Helical" evidence="1">
    <location>
        <begin position="108"/>
        <end position="128"/>
    </location>
</feature>
<feature type="transmembrane region" description="Helical" evidence="1">
    <location>
        <begin position="136"/>
        <end position="156"/>
    </location>
</feature>
<dbReference type="EMBL" id="AM942759">
    <property type="protein sequence ID" value="CAR46318.1"/>
    <property type="molecule type" value="Genomic_DNA"/>
</dbReference>
<dbReference type="RefSeq" id="WP_004246405.1">
    <property type="nucleotide sequence ID" value="NC_010554.1"/>
</dbReference>
<dbReference type="EnsemblBacteria" id="CAR46318">
    <property type="protein sequence ID" value="CAR46318"/>
    <property type="gene ID" value="PMI3225"/>
</dbReference>
<dbReference type="GeneID" id="6803065"/>
<dbReference type="KEGG" id="pmr:PMI3225"/>
<dbReference type="eggNOG" id="COG2862">
    <property type="taxonomic scope" value="Bacteria"/>
</dbReference>
<dbReference type="HOGENOM" id="CLU_097887_1_1_6"/>
<dbReference type="Proteomes" id="UP000008319">
    <property type="component" value="Chromosome"/>
</dbReference>
<dbReference type="GO" id="GO:0005886">
    <property type="term" value="C:plasma membrane"/>
    <property type="evidence" value="ECO:0007669"/>
    <property type="project" value="UniProtKB-SubCell"/>
</dbReference>
<dbReference type="HAMAP" id="MF_00143">
    <property type="entry name" value="UPF0114"/>
    <property type="match status" value="1"/>
</dbReference>
<dbReference type="InterPro" id="IPR005134">
    <property type="entry name" value="UPF0114"/>
</dbReference>
<dbReference type="InterPro" id="IPR020761">
    <property type="entry name" value="UPF0114_bac"/>
</dbReference>
<dbReference type="NCBIfam" id="TIGR00645">
    <property type="entry name" value="HI0507"/>
    <property type="match status" value="1"/>
</dbReference>
<dbReference type="PANTHER" id="PTHR38596">
    <property type="entry name" value="UPF0114 PROTEIN YQHA"/>
    <property type="match status" value="1"/>
</dbReference>
<dbReference type="PANTHER" id="PTHR38596:SF1">
    <property type="entry name" value="UPF0114 PROTEIN YQHA"/>
    <property type="match status" value="1"/>
</dbReference>
<dbReference type="Pfam" id="PF03350">
    <property type="entry name" value="UPF0114"/>
    <property type="match status" value="1"/>
</dbReference>
<gene>
    <name type="ordered locus">PMI3225</name>
</gene>
<sequence length="172" mass="19497">MNRIVEKWMYRSRWLFAPVYIGLSLGLLALTIKFFQSMYEILPNIFALSEADLVLRLLSLIDLALVGGLLIMVIFSGYENFITNMEIEGAKDKLSWLGNMDAESLKNKVAASIVAISSIHLLGVFMDLKNIPDNKLLWYVVLHLTFVFSAFVMGYLEKISKRSKRANKANQG</sequence>
<keyword id="KW-1003">Cell membrane</keyword>
<keyword id="KW-0472">Membrane</keyword>
<keyword id="KW-1185">Reference proteome</keyword>
<keyword id="KW-0812">Transmembrane</keyword>
<keyword id="KW-1133">Transmembrane helix</keyword>
<reference key="1">
    <citation type="journal article" date="2008" name="J. Bacteriol.">
        <title>Complete genome sequence of uropathogenic Proteus mirabilis, a master of both adherence and motility.</title>
        <authorList>
            <person name="Pearson M.M."/>
            <person name="Sebaihia M."/>
            <person name="Churcher C."/>
            <person name="Quail M.A."/>
            <person name="Seshasayee A.S."/>
            <person name="Luscombe N.M."/>
            <person name="Abdellah Z."/>
            <person name="Arrosmith C."/>
            <person name="Atkin B."/>
            <person name="Chillingworth T."/>
            <person name="Hauser H."/>
            <person name="Jagels K."/>
            <person name="Moule S."/>
            <person name="Mungall K."/>
            <person name="Norbertczak H."/>
            <person name="Rabbinowitsch E."/>
            <person name="Walker D."/>
            <person name="Whithead S."/>
            <person name="Thomson N.R."/>
            <person name="Rather P.N."/>
            <person name="Parkhill J."/>
            <person name="Mobley H.L.T."/>
        </authorList>
    </citation>
    <scope>NUCLEOTIDE SEQUENCE [LARGE SCALE GENOMIC DNA]</scope>
    <source>
        <strain>HI4320</strain>
    </source>
</reference>
<protein>
    <recommendedName>
        <fullName evidence="1">UPF0114 protein PMI3225</fullName>
    </recommendedName>
</protein>
<comment type="subcellular location">
    <subcellularLocation>
        <location evidence="1">Cell membrane</location>
        <topology evidence="1">Multi-pass membrane protein</topology>
    </subcellularLocation>
</comment>
<comment type="similarity">
    <text evidence="1">Belongs to the UPF0114 family.</text>
</comment>
<name>Y3225_PROMH</name>